<gene>
    <name evidence="1" type="primary">purA</name>
    <name type="ordered locus">RPC_4086</name>
</gene>
<dbReference type="EC" id="6.3.4.4" evidence="1"/>
<dbReference type="EMBL" id="CP000301">
    <property type="protein sequence ID" value="ABD89612.1"/>
    <property type="molecule type" value="Genomic_DNA"/>
</dbReference>
<dbReference type="SMR" id="Q20Z24"/>
<dbReference type="STRING" id="316056.RPC_4086"/>
<dbReference type="KEGG" id="rpc:RPC_4086"/>
<dbReference type="eggNOG" id="COG0104">
    <property type="taxonomic scope" value="Bacteria"/>
</dbReference>
<dbReference type="HOGENOM" id="CLU_029848_0_0_5"/>
<dbReference type="OrthoDB" id="9807553at2"/>
<dbReference type="UniPathway" id="UPA00075">
    <property type="reaction ID" value="UER00335"/>
</dbReference>
<dbReference type="GO" id="GO:0005737">
    <property type="term" value="C:cytoplasm"/>
    <property type="evidence" value="ECO:0007669"/>
    <property type="project" value="UniProtKB-SubCell"/>
</dbReference>
<dbReference type="GO" id="GO:0004019">
    <property type="term" value="F:adenylosuccinate synthase activity"/>
    <property type="evidence" value="ECO:0007669"/>
    <property type="project" value="UniProtKB-UniRule"/>
</dbReference>
<dbReference type="GO" id="GO:0005525">
    <property type="term" value="F:GTP binding"/>
    <property type="evidence" value="ECO:0007669"/>
    <property type="project" value="UniProtKB-UniRule"/>
</dbReference>
<dbReference type="GO" id="GO:0000287">
    <property type="term" value="F:magnesium ion binding"/>
    <property type="evidence" value="ECO:0007669"/>
    <property type="project" value="UniProtKB-UniRule"/>
</dbReference>
<dbReference type="GO" id="GO:0044208">
    <property type="term" value="P:'de novo' AMP biosynthetic process"/>
    <property type="evidence" value="ECO:0007669"/>
    <property type="project" value="UniProtKB-UniRule"/>
</dbReference>
<dbReference type="GO" id="GO:0046040">
    <property type="term" value="P:IMP metabolic process"/>
    <property type="evidence" value="ECO:0007669"/>
    <property type="project" value="TreeGrafter"/>
</dbReference>
<dbReference type="CDD" id="cd03108">
    <property type="entry name" value="AdSS"/>
    <property type="match status" value="1"/>
</dbReference>
<dbReference type="FunFam" id="1.10.300.10:FF:000001">
    <property type="entry name" value="Adenylosuccinate synthetase"/>
    <property type="match status" value="1"/>
</dbReference>
<dbReference type="FunFam" id="3.90.170.10:FF:000001">
    <property type="entry name" value="Adenylosuccinate synthetase"/>
    <property type="match status" value="1"/>
</dbReference>
<dbReference type="Gene3D" id="3.40.440.10">
    <property type="entry name" value="Adenylosuccinate Synthetase, subunit A, domain 1"/>
    <property type="match status" value="1"/>
</dbReference>
<dbReference type="Gene3D" id="1.10.300.10">
    <property type="entry name" value="Adenylosuccinate Synthetase, subunit A, domain 2"/>
    <property type="match status" value="1"/>
</dbReference>
<dbReference type="Gene3D" id="3.90.170.10">
    <property type="entry name" value="Adenylosuccinate Synthetase, subunit A, domain 3"/>
    <property type="match status" value="1"/>
</dbReference>
<dbReference type="HAMAP" id="MF_00011">
    <property type="entry name" value="Adenylosucc_synth"/>
    <property type="match status" value="1"/>
</dbReference>
<dbReference type="InterPro" id="IPR018220">
    <property type="entry name" value="Adenylosuccin_syn_GTP-bd"/>
</dbReference>
<dbReference type="InterPro" id="IPR033128">
    <property type="entry name" value="Adenylosuccin_syn_Lys_AS"/>
</dbReference>
<dbReference type="InterPro" id="IPR042109">
    <property type="entry name" value="Adenylosuccinate_synth_dom1"/>
</dbReference>
<dbReference type="InterPro" id="IPR042110">
    <property type="entry name" value="Adenylosuccinate_synth_dom2"/>
</dbReference>
<dbReference type="InterPro" id="IPR042111">
    <property type="entry name" value="Adenylosuccinate_synth_dom3"/>
</dbReference>
<dbReference type="InterPro" id="IPR001114">
    <property type="entry name" value="Adenylosuccinate_synthetase"/>
</dbReference>
<dbReference type="InterPro" id="IPR027417">
    <property type="entry name" value="P-loop_NTPase"/>
</dbReference>
<dbReference type="NCBIfam" id="NF002223">
    <property type="entry name" value="PRK01117.1"/>
    <property type="match status" value="1"/>
</dbReference>
<dbReference type="NCBIfam" id="TIGR00184">
    <property type="entry name" value="purA"/>
    <property type="match status" value="1"/>
</dbReference>
<dbReference type="PANTHER" id="PTHR11846">
    <property type="entry name" value="ADENYLOSUCCINATE SYNTHETASE"/>
    <property type="match status" value="1"/>
</dbReference>
<dbReference type="PANTHER" id="PTHR11846:SF0">
    <property type="entry name" value="ADENYLOSUCCINATE SYNTHETASE"/>
    <property type="match status" value="1"/>
</dbReference>
<dbReference type="Pfam" id="PF00709">
    <property type="entry name" value="Adenylsucc_synt"/>
    <property type="match status" value="1"/>
</dbReference>
<dbReference type="SMART" id="SM00788">
    <property type="entry name" value="Adenylsucc_synt"/>
    <property type="match status" value="1"/>
</dbReference>
<dbReference type="SUPFAM" id="SSF52540">
    <property type="entry name" value="P-loop containing nucleoside triphosphate hydrolases"/>
    <property type="match status" value="1"/>
</dbReference>
<dbReference type="PROSITE" id="PS01266">
    <property type="entry name" value="ADENYLOSUCCIN_SYN_1"/>
    <property type="match status" value="1"/>
</dbReference>
<dbReference type="PROSITE" id="PS00513">
    <property type="entry name" value="ADENYLOSUCCIN_SYN_2"/>
    <property type="match status" value="1"/>
</dbReference>
<name>PURA_RHOPB</name>
<protein>
    <recommendedName>
        <fullName evidence="1">Adenylosuccinate synthetase</fullName>
        <shortName evidence="1">AMPSase</shortName>
        <shortName evidence="1">AdSS</shortName>
        <ecNumber evidence="1">6.3.4.4</ecNumber>
    </recommendedName>
    <alternativeName>
        <fullName evidence="1">IMP--aspartate ligase</fullName>
    </alternativeName>
</protein>
<sequence length="430" mass="46848">MANVVVVGAQWGDEGKGKIVDWLSEQADIVVRFQGGHNAGHTLVINGQTYKLALLPSGVLRPSKLSVIGNGVVFDPQAFLDEVKKLQDQGVAISPDNLRIAENVTLILPLHRELDALRENASKATAIGTTQRGIGPAYEDKVGRRAIRLMDLADLATLPPKIDRLLAHHNALRRGFSLPEFDAGKILQELTAFAPKLLPYAETVWRLLDIKRREGKRILFEGAQGALLDVDHGTYPYVTSSNTVAAQAATGTGMGPSTVGYVLGICKAYTTRVGQGPFPTELTNEIGEEIGRRGKEFGVNTGRKRRCGWFDAVLVRQTVRTCGIHGLALTKLDILDGFDSIEVCVGYMLDGKEIDHLPAGEGAQSRVEPIYETIEGWKEPTANARSWADLPAQAIKYVRRVEELVGCPIALLSTSPEREDTILVQNPFEA</sequence>
<organism>
    <name type="scientific">Rhodopseudomonas palustris (strain BisB18)</name>
    <dbReference type="NCBI Taxonomy" id="316056"/>
    <lineage>
        <taxon>Bacteria</taxon>
        <taxon>Pseudomonadati</taxon>
        <taxon>Pseudomonadota</taxon>
        <taxon>Alphaproteobacteria</taxon>
        <taxon>Hyphomicrobiales</taxon>
        <taxon>Nitrobacteraceae</taxon>
        <taxon>Rhodopseudomonas</taxon>
    </lineage>
</organism>
<comment type="function">
    <text evidence="1">Plays an important role in the de novo pathway of purine nucleotide biosynthesis. Catalyzes the first committed step in the biosynthesis of AMP from IMP.</text>
</comment>
<comment type="catalytic activity">
    <reaction evidence="1">
        <text>IMP + L-aspartate + GTP = N(6)-(1,2-dicarboxyethyl)-AMP + GDP + phosphate + 2 H(+)</text>
        <dbReference type="Rhea" id="RHEA:15753"/>
        <dbReference type="ChEBI" id="CHEBI:15378"/>
        <dbReference type="ChEBI" id="CHEBI:29991"/>
        <dbReference type="ChEBI" id="CHEBI:37565"/>
        <dbReference type="ChEBI" id="CHEBI:43474"/>
        <dbReference type="ChEBI" id="CHEBI:57567"/>
        <dbReference type="ChEBI" id="CHEBI:58053"/>
        <dbReference type="ChEBI" id="CHEBI:58189"/>
        <dbReference type="EC" id="6.3.4.4"/>
    </reaction>
</comment>
<comment type="cofactor">
    <cofactor evidence="1">
        <name>Mg(2+)</name>
        <dbReference type="ChEBI" id="CHEBI:18420"/>
    </cofactor>
    <text evidence="1">Binds 1 Mg(2+) ion per subunit.</text>
</comment>
<comment type="pathway">
    <text evidence="1">Purine metabolism; AMP biosynthesis via de novo pathway; AMP from IMP: step 1/2.</text>
</comment>
<comment type="subunit">
    <text evidence="1">Homodimer.</text>
</comment>
<comment type="subcellular location">
    <subcellularLocation>
        <location evidence="1">Cytoplasm</location>
    </subcellularLocation>
</comment>
<comment type="similarity">
    <text evidence="1">Belongs to the adenylosuccinate synthetase family.</text>
</comment>
<accession>Q20Z24</accession>
<proteinExistence type="inferred from homology"/>
<keyword id="KW-0963">Cytoplasm</keyword>
<keyword id="KW-0342">GTP-binding</keyword>
<keyword id="KW-0436">Ligase</keyword>
<keyword id="KW-0460">Magnesium</keyword>
<keyword id="KW-0479">Metal-binding</keyword>
<keyword id="KW-0547">Nucleotide-binding</keyword>
<keyword id="KW-0658">Purine biosynthesis</keyword>
<feature type="chain" id="PRO_1000000906" description="Adenylosuccinate synthetase">
    <location>
        <begin position="1"/>
        <end position="430"/>
    </location>
</feature>
<feature type="active site" description="Proton acceptor" evidence="1">
    <location>
        <position position="13"/>
    </location>
</feature>
<feature type="active site" description="Proton donor" evidence="1">
    <location>
        <position position="41"/>
    </location>
</feature>
<feature type="binding site" evidence="1">
    <location>
        <begin position="12"/>
        <end position="18"/>
    </location>
    <ligand>
        <name>GTP</name>
        <dbReference type="ChEBI" id="CHEBI:37565"/>
    </ligand>
</feature>
<feature type="binding site" description="in other chain" evidence="1">
    <location>
        <begin position="13"/>
        <end position="16"/>
    </location>
    <ligand>
        <name>IMP</name>
        <dbReference type="ChEBI" id="CHEBI:58053"/>
        <note>ligand shared between dimeric partners</note>
    </ligand>
</feature>
<feature type="binding site" evidence="1">
    <location>
        <position position="13"/>
    </location>
    <ligand>
        <name>Mg(2+)</name>
        <dbReference type="ChEBI" id="CHEBI:18420"/>
    </ligand>
</feature>
<feature type="binding site" description="in other chain" evidence="1">
    <location>
        <begin position="38"/>
        <end position="41"/>
    </location>
    <ligand>
        <name>IMP</name>
        <dbReference type="ChEBI" id="CHEBI:58053"/>
        <note>ligand shared between dimeric partners</note>
    </ligand>
</feature>
<feature type="binding site" evidence="1">
    <location>
        <begin position="40"/>
        <end position="42"/>
    </location>
    <ligand>
        <name>GTP</name>
        <dbReference type="ChEBI" id="CHEBI:37565"/>
    </ligand>
</feature>
<feature type="binding site" evidence="1">
    <location>
        <position position="40"/>
    </location>
    <ligand>
        <name>Mg(2+)</name>
        <dbReference type="ChEBI" id="CHEBI:18420"/>
    </ligand>
</feature>
<feature type="binding site" description="in other chain" evidence="1">
    <location>
        <position position="130"/>
    </location>
    <ligand>
        <name>IMP</name>
        <dbReference type="ChEBI" id="CHEBI:58053"/>
        <note>ligand shared between dimeric partners</note>
    </ligand>
</feature>
<feature type="binding site" evidence="1">
    <location>
        <position position="144"/>
    </location>
    <ligand>
        <name>IMP</name>
        <dbReference type="ChEBI" id="CHEBI:58053"/>
        <note>ligand shared between dimeric partners</note>
    </ligand>
</feature>
<feature type="binding site" description="in other chain" evidence="1">
    <location>
        <position position="224"/>
    </location>
    <ligand>
        <name>IMP</name>
        <dbReference type="ChEBI" id="CHEBI:58053"/>
        <note>ligand shared between dimeric partners</note>
    </ligand>
</feature>
<feature type="binding site" description="in other chain" evidence="1">
    <location>
        <position position="239"/>
    </location>
    <ligand>
        <name>IMP</name>
        <dbReference type="ChEBI" id="CHEBI:58053"/>
        <note>ligand shared between dimeric partners</note>
    </ligand>
</feature>
<feature type="binding site" evidence="1">
    <location>
        <begin position="299"/>
        <end position="305"/>
    </location>
    <ligand>
        <name>substrate</name>
    </ligand>
</feature>
<feature type="binding site" description="in other chain" evidence="1">
    <location>
        <position position="303"/>
    </location>
    <ligand>
        <name>IMP</name>
        <dbReference type="ChEBI" id="CHEBI:58053"/>
        <note>ligand shared between dimeric partners</note>
    </ligand>
</feature>
<feature type="binding site" evidence="1">
    <location>
        <position position="305"/>
    </location>
    <ligand>
        <name>GTP</name>
        <dbReference type="ChEBI" id="CHEBI:37565"/>
    </ligand>
</feature>
<feature type="binding site" evidence="1">
    <location>
        <begin position="331"/>
        <end position="333"/>
    </location>
    <ligand>
        <name>GTP</name>
        <dbReference type="ChEBI" id="CHEBI:37565"/>
    </ligand>
</feature>
<feature type="binding site" evidence="1">
    <location>
        <begin position="413"/>
        <end position="415"/>
    </location>
    <ligand>
        <name>GTP</name>
        <dbReference type="ChEBI" id="CHEBI:37565"/>
    </ligand>
</feature>
<reference key="1">
    <citation type="submission" date="2006-03" db="EMBL/GenBank/DDBJ databases">
        <title>Complete sequence of Rhodopseudomonas palustris BisB18.</title>
        <authorList>
            <consortium name="US DOE Joint Genome Institute"/>
            <person name="Copeland A."/>
            <person name="Lucas S."/>
            <person name="Lapidus A."/>
            <person name="Barry K."/>
            <person name="Detter J.C."/>
            <person name="Glavina del Rio T."/>
            <person name="Hammon N."/>
            <person name="Israni S."/>
            <person name="Dalin E."/>
            <person name="Tice H."/>
            <person name="Pitluck S."/>
            <person name="Chain P."/>
            <person name="Malfatti S."/>
            <person name="Shin M."/>
            <person name="Vergez L."/>
            <person name="Schmutz J."/>
            <person name="Larimer F."/>
            <person name="Land M."/>
            <person name="Hauser L."/>
            <person name="Pelletier D.A."/>
            <person name="Kyrpides N."/>
            <person name="Anderson I."/>
            <person name="Oda Y."/>
            <person name="Harwood C.S."/>
            <person name="Richardson P."/>
        </authorList>
    </citation>
    <scope>NUCLEOTIDE SEQUENCE [LARGE SCALE GENOMIC DNA]</scope>
    <source>
        <strain>BisB18</strain>
    </source>
</reference>
<evidence type="ECO:0000255" key="1">
    <source>
        <dbReference type="HAMAP-Rule" id="MF_00011"/>
    </source>
</evidence>